<gene>
    <name type="ordered locus">Mal-053</name>
</gene>
<name>RIR1_ASFM2</name>
<sequence>MENFFIVKKLASATYGKALNVDLNKLLQALNHHSLQGLISYCSALTILHYDYSTLAARLSVYLLHQSTASSFSKAVSLQAAQSCSRLSSHFVDVVYKYKAIFDSYIDYSRDYKLSLLGIETMKNSYLLKNKDGVIMERPQDAYMRVAIMIHGMGRVVNMKMILLTYDLLSRHVITHASPTMFNAGTKKPQLSSCFLLNVNDNLENLYDMVKTAGIISGGGGGIGLCLSGIRAKNSFISGSGLRSNGIQNYIVLQNASQCYANQGGLRPGAYAVYLELWHQDIFTFLQMPRLKGQMAEQRLNAPNLKYGLWVPDLFMEILEDQIHNRGDGTWYLFSPDQAPNLHKVFDLERSQHENAHREFKKLYYQYVAEKRYTGVTTAKEIIKEWFKTVVQVGNPYIGFKDAINRKSNLSHVGTITNSNLCIEITIPCWEGNEAEQGVCNLAAVNLAAFIRESSYDYRGLIEAAGNVTENLDNIIDNGYYPTEATRRSNMRHRPIGIGVFGLADVFASLKMKFGSPEAIAIDEAIHAALYYGAMRRSIELAKEKGSHPSFPGSAASKGLLQPDLWVRCGDLIPSWENRVAQTTQGVLTPKKWWQLRLAAIQGVRNGYLTALMPTATSSNSTGKNECFEPFTSNLYTRRTLSGEFIILNKYLMDDLEEINLWSEDIQQQLLNAGGSIQHILDIPAEIRERYKTSREMNQKILTKHAAARNPFVSQSMSLNYYFYEPELSQVLTVLVLGWKKGLTTGSYYCHFSPGAGTQKKIIRNSEKACNADCEACLL</sequence>
<reference key="1">
    <citation type="journal article" date="1991" name="Virology">
        <title>The sequences of the ribonucleotide reductase genes from African swine fever virus show considerable homology with those of the orthopoxvirus, vaccinia virus.</title>
        <authorList>
            <person name="Boursnell M."/>
            <person name="Shaw K."/>
            <person name="Yanez R.J."/>
            <person name="Vinuela E."/>
            <person name="Dixon L."/>
        </authorList>
    </citation>
    <scope>NUCLEOTIDE SEQUENCE [GENOMIC DNA]</scope>
</reference>
<reference key="2">
    <citation type="submission" date="2003-03" db="EMBL/GenBank/DDBJ databases">
        <title>African swine fever virus genomes.</title>
        <authorList>
            <person name="Kutish G.F."/>
            <person name="Rock D.L."/>
        </authorList>
    </citation>
    <scope>NUCLEOTIDE SEQUENCE [LARGE SCALE GENOMIC DNA]</scope>
</reference>
<dbReference type="EC" id="1.17.4.1"/>
<dbReference type="EMBL" id="M64728">
    <property type="protein sequence ID" value="AAA42732.1"/>
    <property type="molecule type" value="Genomic_DNA"/>
</dbReference>
<dbReference type="PIR" id="A40568">
    <property type="entry name" value="WMVZAL"/>
</dbReference>
<dbReference type="SMR" id="P26685"/>
<dbReference type="GO" id="GO:0005524">
    <property type="term" value="F:ATP binding"/>
    <property type="evidence" value="ECO:0007669"/>
    <property type="project" value="UniProtKB-KW"/>
</dbReference>
<dbReference type="GO" id="GO:0004748">
    <property type="term" value="F:ribonucleoside-diphosphate reductase activity, thioredoxin disulfide as acceptor"/>
    <property type="evidence" value="ECO:0007669"/>
    <property type="project" value="UniProtKB-EC"/>
</dbReference>
<dbReference type="GO" id="GO:0009263">
    <property type="term" value="P:deoxyribonucleotide biosynthetic process"/>
    <property type="evidence" value="ECO:0007669"/>
    <property type="project" value="UniProtKB-KW"/>
</dbReference>
<dbReference type="Gene3D" id="3.20.70.20">
    <property type="match status" value="1"/>
</dbReference>
<dbReference type="InterPro" id="IPR013346">
    <property type="entry name" value="NrdE_NrdA_C"/>
</dbReference>
<dbReference type="InterPro" id="IPR000788">
    <property type="entry name" value="RNR_lg_C"/>
</dbReference>
<dbReference type="InterPro" id="IPR013509">
    <property type="entry name" value="RNR_lsu_N"/>
</dbReference>
<dbReference type="InterPro" id="IPR008926">
    <property type="entry name" value="RNR_R1-su_N"/>
</dbReference>
<dbReference type="InterPro" id="IPR039718">
    <property type="entry name" value="Rrm1"/>
</dbReference>
<dbReference type="NCBIfam" id="TIGR02506">
    <property type="entry name" value="NrdE_NrdA"/>
    <property type="match status" value="1"/>
</dbReference>
<dbReference type="PANTHER" id="PTHR11573">
    <property type="entry name" value="RIBONUCLEOSIDE-DIPHOSPHATE REDUCTASE LARGE CHAIN"/>
    <property type="match status" value="1"/>
</dbReference>
<dbReference type="PANTHER" id="PTHR11573:SF6">
    <property type="entry name" value="RIBONUCLEOSIDE-DIPHOSPHATE REDUCTASE LARGE SUBUNIT"/>
    <property type="match status" value="1"/>
</dbReference>
<dbReference type="Pfam" id="PF02867">
    <property type="entry name" value="Ribonuc_red_lgC"/>
    <property type="match status" value="1"/>
</dbReference>
<dbReference type="Pfam" id="PF00317">
    <property type="entry name" value="Ribonuc_red_lgN"/>
    <property type="match status" value="1"/>
</dbReference>
<dbReference type="PRINTS" id="PR01183">
    <property type="entry name" value="RIBORDTASEM1"/>
</dbReference>
<dbReference type="SUPFAM" id="SSF51998">
    <property type="entry name" value="PFL-like glycyl radical enzymes"/>
    <property type="match status" value="1"/>
</dbReference>
<dbReference type="SUPFAM" id="SSF48168">
    <property type="entry name" value="R1 subunit of ribonucleotide reductase, N-terminal domain"/>
    <property type="match status" value="1"/>
</dbReference>
<dbReference type="PROSITE" id="PS00089">
    <property type="entry name" value="RIBORED_LARGE"/>
    <property type="match status" value="1"/>
</dbReference>
<evidence type="ECO:0000250" key="1"/>
<evidence type="ECO:0000305" key="2"/>
<feature type="chain" id="PRO_0000187228" description="Ribonucleoside-diphosphate reductase large subunit">
    <location>
        <begin position="1"/>
        <end position="779"/>
    </location>
</feature>
<feature type="active site" description="Proton acceptor" evidence="1">
    <location>
        <position position="420"/>
    </location>
</feature>
<feature type="active site" description="Cysteine radical intermediate" evidence="1">
    <location>
        <position position="422"/>
    </location>
</feature>
<feature type="active site" description="Proton acceptor" evidence="1">
    <location>
        <position position="424"/>
    </location>
</feature>
<feature type="binding site" evidence="1">
    <location>
        <position position="178"/>
    </location>
    <ligand>
        <name>substrate</name>
    </ligand>
</feature>
<feature type="binding site" evidence="1">
    <location>
        <begin position="193"/>
        <end position="194"/>
    </location>
    <ligand>
        <name>substrate</name>
    </ligand>
</feature>
<feature type="binding site" evidence="1">
    <location>
        <position position="222"/>
    </location>
    <ligand>
        <name>substrate</name>
    </ligand>
</feature>
<feature type="binding site" evidence="1">
    <location>
        <begin position="420"/>
        <end position="424"/>
    </location>
    <ligand>
        <name>substrate</name>
    </ligand>
</feature>
<feature type="binding site" evidence="1">
    <location>
        <begin position="614"/>
        <end position="618"/>
    </location>
    <ligand>
        <name>substrate</name>
    </ligand>
</feature>
<feature type="site" description="Important for hydrogen atom transfer" evidence="1">
    <location>
        <position position="194"/>
    </location>
</feature>
<feature type="site" description="Allosteric effector binding" evidence="1">
    <location>
        <position position="201"/>
    </location>
</feature>
<feature type="site" description="Allosteric effector binding" evidence="1">
    <location>
        <position position="231"/>
    </location>
</feature>
<feature type="site" description="Important for hydrogen atom transfer" evidence="1">
    <location>
        <position position="440"/>
    </location>
</feature>
<feature type="site" description="Important for electron transfer" evidence="1">
    <location>
        <position position="748"/>
    </location>
</feature>
<feature type="site" description="Important for electron transfer" evidence="1">
    <location>
        <position position="749"/>
    </location>
</feature>
<feature type="site" description="Interacts with thioredoxin/glutaredoxin" evidence="1">
    <location>
        <position position="774"/>
    </location>
</feature>
<feature type="site" description="Interacts with thioredoxin/glutaredoxin" evidence="1">
    <location>
        <position position="777"/>
    </location>
</feature>
<feature type="disulfide bond" description="Redox-active" evidence="1">
    <location>
        <begin position="194"/>
        <end position="440"/>
    </location>
</feature>
<comment type="function">
    <text evidence="1">Ribonucleoside-diphosphate reductase holoenzyme provides the precursors necessary for viral DNA synthesis. Allows virus growth in non-dividing cells. Catalyzes the biosynthesis of deoxyribonucleotides from the corresponding ribonucleotides (By similarity).</text>
</comment>
<comment type="catalytic activity">
    <reaction>
        <text>a 2'-deoxyribonucleoside 5'-diphosphate + [thioredoxin]-disulfide + H2O = a ribonucleoside 5'-diphosphate + [thioredoxin]-dithiol</text>
        <dbReference type="Rhea" id="RHEA:23252"/>
        <dbReference type="Rhea" id="RHEA-COMP:10698"/>
        <dbReference type="Rhea" id="RHEA-COMP:10700"/>
        <dbReference type="ChEBI" id="CHEBI:15377"/>
        <dbReference type="ChEBI" id="CHEBI:29950"/>
        <dbReference type="ChEBI" id="CHEBI:50058"/>
        <dbReference type="ChEBI" id="CHEBI:57930"/>
        <dbReference type="ChEBI" id="CHEBI:73316"/>
        <dbReference type="EC" id="1.17.4.1"/>
    </reaction>
</comment>
<comment type="activity regulation">
    <text evidence="1">Under complex allosteric control mediated by deoxynucleoside triphosphates and ATP binding. The type of nucleotide bound at the specificity site determines substrate preference. It seems probable that ATP makes the enzyme reduce CDP and UDP, dGTP favors ADP reduction and dTTP favors GDP reduction (By similarity).</text>
</comment>
<comment type="subunit">
    <text evidence="1">Heterotetramer composed of a homodimer of the large subunit (R1) and a homodimer of the small subunit (R2). Larger multisubunit protein complex are also active, composed of (R1)n(R2)n (By similarity).</text>
</comment>
<comment type="induction">
    <text evidence="2">Expressed in the early phase of the viral replicative cycle.</text>
</comment>
<comment type="similarity">
    <text evidence="2">Belongs to the ribonucleoside diphosphate reductase large chain family.</text>
</comment>
<protein>
    <recommendedName>
        <fullName>Ribonucleoside-diphosphate reductase large subunit</fullName>
        <ecNumber>1.17.4.1</ecNumber>
    </recommendedName>
    <alternativeName>
        <fullName>Ribonucleotide reductase large subunit</fullName>
    </alternativeName>
</protein>
<organism>
    <name type="scientific">African swine fever virus (isolate Tick/Malawi/Lil 20-1/1983)</name>
    <name type="common">ASFV</name>
    <dbReference type="NCBI Taxonomy" id="10500"/>
    <lineage>
        <taxon>Viruses</taxon>
        <taxon>Varidnaviria</taxon>
        <taxon>Bamfordvirae</taxon>
        <taxon>Nucleocytoviricota</taxon>
        <taxon>Pokkesviricetes</taxon>
        <taxon>Asfuvirales</taxon>
        <taxon>Asfarviridae</taxon>
        <taxon>Asfivirus</taxon>
        <taxon>African swine fever virus</taxon>
    </lineage>
</organism>
<proteinExistence type="inferred from homology"/>
<keyword id="KW-0021">Allosteric enzyme</keyword>
<keyword id="KW-0067">ATP-binding</keyword>
<keyword id="KW-0215">Deoxyribonucleotide synthesis</keyword>
<keyword id="KW-1015">Disulfide bond</keyword>
<keyword id="KW-0244">Early protein</keyword>
<keyword id="KW-0547">Nucleotide-binding</keyword>
<keyword id="KW-0560">Oxidoreductase</keyword>
<accession>P26685</accession>
<organismHost>
    <name type="scientific">Ornithodoros</name>
    <name type="common">relapsing fever ticks</name>
    <dbReference type="NCBI Taxonomy" id="6937"/>
</organismHost>
<organismHost>
    <name type="scientific">Phacochoerus aethiopicus</name>
    <name type="common">Warthog</name>
    <dbReference type="NCBI Taxonomy" id="85517"/>
</organismHost>
<organismHost>
    <name type="scientific">Phacochoerus africanus</name>
    <name type="common">Warthog</name>
    <dbReference type="NCBI Taxonomy" id="41426"/>
</organismHost>
<organismHost>
    <name type="scientific">Potamochoerus larvatus</name>
    <name type="common">Bushpig</name>
    <dbReference type="NCBI Taxonomy" id="273792"/>
</organismHost>
<organismHost>
    <name type="scientific">Sus scrofa</name>
    <name type="common">Pig</name>
    <dbReference type="NCBI Taxonomy" id="9823"/>
</organismHost>